<organism>
    <name type="scientific">Escherichia coli O7:K1 (strain IAI39 / ExPEC)</name>
    <dbReference type="NCBI Taxonomy" id="585057"/>
    <lineage>
        <taxon>Bacteria</taxon>
        <taxon>Pseudomonadati</taxon>
        <taxon>Pseudomonadota</taxon>
        <taxon>Gammaproteobacteria</taxon>
        <taxon>Enterobacterales</taxon>
        <taxon>Enterobacteriaceae</taxon>
        <taxon>Escherichia</taxon>
    </lineage>
</organism>
<comment type="function">
    <text evidence="1">Catalyzes the ATP-dependent 2-thiolation of cytidine in position 32 of tRNA, to form 2-thiocytidine (s(2)C32). The sulfur atoms are provided by the cysteine/cysteine desulfurase (IscS) system.</text>
</comment>
<comment type="catalytic activity">
    <reaction evidence="1">
        <text>cytidine(32) in tRNA + S-sulfanyl-L-cysteinyl-[cysteine desulfurase] + AH2 + ATP = 2-thiocytidine(32) in tRNA + L-cysteinyl-[cysteine desulfurase] + A + AMP + diphosphate + H(+)</text>
        <dbReference type="Rhea" id="RHEA:57048"/>
        <dbReference type="Rhea" id="RHEA-COMP:10288"/>
        <dbReference type="Rhea" id="RHEA-COMP:12157"/>
        <dbReference type="Rhea" id="RHEA-COMP:12158"/>
        <dbReference type="Rhea" id="RHEA-COMP:14821"/>
        <dbReference type="ChEBI" id="CHEBI:13193"/>
        <dbReference type="ChEBI" id="CHEBI:15378"/>
        <dbReference type="ChEBI" id="CHEBI:17499"/>
        <dbReference type="ChEBI" id="CHEBI:29950"/>
        <dbReference type="ChEBI" id="CHEBI:30616"/>
        <dbReference type="ChEBI" id="CHEBI:33019"/>
        <dbReference type="ChEBI" id="CHEBI:61963"/>
        <dbReference type="ChEBI" id="CHEBI:82748"/>
        <dbReference type="ChEBI" id="CHEBI:141453"/>
        <dbReference type="ChEBI" id="CHEBI:456215"/>
    </reaction>
    <physiologicalReaction direction="left-to-right" evidence="1">
        <dbReference type="Rhea" id="RHEA:57049"/>
    </physiologicalReaction>
</comment>
<comment type="cofactor">
    <cofactor evidence="1">
        <name>Mg(2+)</name>
        <dbReference type="ChEBI" id="CHEBI:18420"/>
    </cofactor>
</comment>
<comment type="cofactor">
    <cofactor evidence="1">
        <name>[4Fe-4S] cluster</name>
        <dbReference type="ChEBI" id="CHEBI:49883"/>
    </cofactor>
    <text evidence="1">Binds 1 [4Fe-4S] cluster per subunit. The cluster is chelated by three Cys residues, the fourth Fe has a free coordination site that may bind a sulfur atom transferred from the persulfide of IscS.</text>
</comment>
<comment type="pathway">
    <text evidence="1">tRNA modification.</text>
</comment>
<comment type="subunit">
    <text evidence="1">Homodimer.</text>
</comment>
<comment type="subcellular location">
    <subcellularLocation>
        <location evidence="1">Cytoplasm</location>
    </subcellularLocation>
</comment>
<comment type="miscellaneous">
    <text evidence="1">The thiolation reaction likely consists of two steps: a first activation step by ATP to form an adenylated intermediate of the target base of tRNA, and a second nucleophilic substitution step of the sulfur (S) atom supplied by the hydrosulfide attached to the Fe-S cluster.</text>
</comment>
<comment type="similarity">
    <text evidence="1">Belongs to the TtcA family.</text>
</comment>
<keyword id="KW-0004">4Fe-4S</keyword>
<keyword id="KW-0067">ATP-binding</keyword>
<keyword id="KW-0963">Cytoplasm</keyword>
<keyword id="KW-0408">Iron</keyword>
<keyword id="KW-0411">Iron-sulfur</keyword>
<keyword id="KW-0460">Magnesium</keyword>
<keyword id="KW-0479">Metal-binding</keyword>
<keyword id="KW-0547">Nucleotide-binding</keyword>
<keyword id="KW-0694">RNA-binding</keyword>
<keyword id="KW-0808">Transferase</keyword>
<keyword id="KW-0819">tRNA processing</keyword>
<keyword id="KW-0820">tRNA-binding</keyword>
<accession>B7NHP6</accession>
<protein>
    <recommendedName>
        <fullName evidence="1">tRNA-cytidine(32) 2-sulfurtransferase</fullName>
        <ecNumber evidence="1">2.8.1.-</ecNumber>
    </recommendedName>
    <alternativeName>
        <fullName evidence="1">Two-thiocytidine biosynthesis protein A</fullName>
    </alternativeName>
    <alternativeName>
        <fullName evidence="1">tRNA 2-thiocytidine biosynthesis protein TtcA</fullName>
    </alternativeName>
</protein>
<sequence>MSKNQEISKKEQYNLNKLQKRLRRNVGEAIADFNMIEEGDRIMVCLSGGKDSYTMLEILRNLQQSAPINFSLVAVNLDQKQPGFPEHVLPEYLEKLGVEYKIVEENTYGIVKEKIPEGKTTCSLCSRLRRGILYRTATELGATKIALGHHRDDILQTLFLNMFYGGKMKGMPPKLMSDDGKHIVIRPLAYCREKDIQRFADAKAFPIIPCNLCGSQPNLQRQVIADMLRDWDKRYPGRIETMFSAMQNVVPSHLCDTNLFDFKGITHGSEVVNRGDLAFDREEIPLQPAGWQPEEDENQLDELRLNVVEVK</sequence>
<evidence type="ECO:0000255" key="1">
    <source>
        <dbReference type="HAMAP-Rule" id="MF_01850"/>
    </source>
</evidence>
<gene>
    <name evidence="1" type="primary">ttcA</name>
    <name type="ordered locus">ECIAI39_1695</name>
</gene>
<feature type="chain" id="PRO_1000188637" description="tRNA-cytidine(32) 2-sulfurtransferase">
    <location>
        <begin position="1"/>
        <end position="311"/>
    </location>
</feature>
<feature type="short sequence motif" description="PP-loop motif" evidence="1">
    <location>
        <begin position="47"/>
        <end position="52"/>
    </location>
</feature>
<feature type="binding site" evidence="1">
    <location>
        <position position="122"/>
    </location>
    <ligand>
        <name>[4Fe-4S] cluster</name>
        <dbReference type="ChEBI" id="CHEBI:49883"/>
    </ligand>
</feature>
<feature type="binding site" evidence="1">
    <location>
        <position position="125"/>
    </location>
    <ligand>
        <name>[4Fe-4S] cluster</name>
        <dbReference type="ChEBI" id="CHEBI:49883"/>
    </ligand>
</feature>
<feature type="binding site" evidence="1">
    <location>
        <position position="213"/>
    </location>
    <ligand>
        <name>[4Fe-4S] cluster</name>
        <dbReference type="ChEBI" id="CHEBI:49883"/>
    </ligand>
</feature>
<reference key="1">
    <citation type="journal article" date="2009" name="PLoS Genet.">
        <title>Organised genome dynamics in the Escherichia coli species results in highly diverse adaptive paths.</title>
        <authorList>
            <person name="Touchon M."/>
            <person name="Hoede C."/>
            <person name="Tenaillon O."/>
            <person name="Barbe V."/>
            <person name="Baeriswyl S."/>
            <person name="Bidet P."/>
            <person name="Bingen E."/>
            <person name="Bonacorsi S."/>
            <person name="Bouchier C."/>
            <person name="Bouvet O."/>
            <person name="Calteau A."/>
            <person name="Chiapello H."/>
            <person name="Clermont O."/>
            <person name="Cruveiller S."/>
            <person name="Danchin A."/>
            <person name="Diard M."/>
            <person name="Dossat C."/>
            <person name="Karoui M.E."/>
            <person name="Frapy E."/>
            <person name="Garry L."/>
            <person name="Ghigo J.M."/>
            <person name="Gilles A.M."/>
            <person name="Johnson J."/>
            <person name="Le Bouguenec C."/>
            <person name="Lescat M."/>
            <person name="Mangenot S."/>
            <person name="Martinez-Jehanne V."/>
            <person name="Matic I."/>
            <person name="Nassif X."/>
            <person name="Oztas S."/>
            <person name="Petit M.A."/>
            <person name="Pichon C."/>
            <person name="Rouy Z."/>
            <person name="Ruf C.S."/>
            <person name="Schneider D."/>
            <person name="Tourret J."/>
            <person name="Vacherie B."/>
            <person name="Vallenet D."/>
            <person name="Medigue C."/>
            <person name="Rocha E.P.C."/>
            <person name="Denamur E."/>
        </authorList>
    </citation>
    <scope>NUCLEOTIDE SEQUENCE [LARGE SCALE GENOMIC DNA]</scope>
    <source>
        <strain>IAI39 / ExPEC</strain>
    </source>
</reference>
<dbReference type="EC" id="2.8.1.-" evidence="1"/>
<dbReference type="EMBL" id="CU928164">
    <property type="protein sequence ID" value="CAR17826.1"/>
    <property type="molecule type" value="Genomic_DNA"/>
</dbReference>
<dbReference type="RefSeq" id="WP_000042156.1">
    <property type="nucleotide sequence ID" value="NC_011750.1"/>
</dbReference>
<dbReference type="RefSeq" id="YP_002407693.1">
    <property type="nucleotide sequence ID" value="NC_011750.1"/>
</dbReference>
<dbReference type="SMR" id="B7NHP6"/>
<dbReference type="STRING" id="585057.ECIAI39_1695"/>
<dbReference type="KEGG" id="ect:ECIAI39_1695"/>
<dbReference type="PATRIC" id="fig|585057.6.peg.1769"/>
<dbReference type="HOGENOM" id="CLU_026481_0_0_6"/>
<dbReference type="Proteomes" id="UP000000749">
    <property type="component" value="Chromosome"/>
</dbReference>
<dbReference type="GO" id="GO:0005737">
    <property type="term" value="C:cytoplasm"/>
    <property type="evidence" value="ECO:0007669"/>
    <property type="project" value="UniProtKB-SubCell"/>
</dbReference>
<dbReference type="GO" id="GO:0051539">
    <property type="term" value="F:4 iron, 4 sulfur cluster binding"/>
    <property type="evidence" value="ECO:0007669"/>
    <property type="project" value="UniProtKB-UniRule"/>
</dbReference>
<dbReference type="GO" id="GO:0005524">
    <property type="term" value="F:ATP binding"/>
    <property type="evidence" value="ECO:0007669"/>
    <property type="project" value="UniProtKB-UniRule"/>
</dbReference>
<dbReference type="GO" id="GO:0000287">
    <property type="term" value="F:magnesium ion binding"/>
    <property type="evidence" value="ECO:0007669"/>
    <property type="project" value="UniProtKB-UniRule"/>
</dbReference>
<dbReference type="GO" id="GO:0016783">
    <property type="term" value="F:sulfurtransferase activity"/>
    <property type="evidence" value="ECO:0007669"/>
    <property type="project" value="UniProtKB-UniRule"/>
</dbReference>
<dbReference type="GO" id="GO:0000049">
    <property type="term" value="F:tRNA binding"/>
    <property type="evidence" value="ECO:0007669"/>
    <property type="project" value="UniProtKB-KW"/>
</dbReference>
<dbReference type="GO" id="GO:0034227">
    <property type="term" value="P:tRNA thio-modification"/>
    <property type="evidence" value="ECO:0007669"/>
    <property type="project" value="UniProtKB-UniRule"/>
</dbReference>
<dbReference type="CDD" id="cd24138">
    <property type="entry name" value="TtcA-like"/>
    <property type="match status" value="1"/>
</dbReference>
<dbReference type="FunFam" id="3.40.50.620:FF:000046">
    <property type="entry name" value="tRNA-cytidine(32) 2-sulfurtransferase"/>
    <property type="match status" value="1"/>
</dbReference>
<dbReference type="Gene3D" id="3.40.50.620">
    <property type="entry name" value="HUPs"/>
    <property type="match status" value="1"/>
</dbReference>
<dbReference type="HAMAP" id="MF_01850">
    <property type="entry name" value="TtcA"/>
    <property type="match status" value="1"/>
</dbReference>
<dbReference type="InterPro" id="IPR014729">
    <property type="entry name" value="Rossmann-like_a/b/a_fold"/>
</dbReference>
<dbReference type="InterPro" id="IPR011063">
    <property type="entry name" value="TilS/TtcA_N"/>
</dbReference>
<dbReference type="InterPro" id="IPR012089">
    <property type="entry name" value="tRNA_Cyd_32_2_STrfase"/>
</dbReference>
<dbReference type="InterPro" id="IPR035107">
    <property type="entry name" value="tRNA_thiolation_TtcA_Ctu1"/>
</dbReference>
<dbReference type="NCBIfam" id="NF007972">
    <property type="entry name" value="PRK10696.1"/>
    <property type="match status" value="1"/>
</dbReference>
<dbReference type="PANTHER" id="PTHR43686:SF1">
    <property type="entry name" value="AMINOTRAN_5 DOMAIN-CONTAINING PROTEIN"/>
    <property type="match status" value="1"/>
</dbReference>
<dbReference type="PANTHER" id="PTHR43686">
    <property type="entry name" value="SULFURTRANSFERASE-RELATED"/>
    <property type="match status" value="1"/>
</dbReference>
<dbReference type="Pfam" id="PF01171">
    <property type="entry name" value="ATP_bind_3"/>
    <property type="match status" value="1"/>
</dbReference>
<dbReference type="PIRSF" id="PIRSF004976">
    <property type="entry name" value="ATPase_YdaO"/>
    <property type="match status" value="1"/>
</dbReference>
<dbReference type="SUPFAM" id="SSF52402">
    <property type="entry name" value="Adenine nucleotide alpha hydrolases-like"/>
    <property type="match status" value="1"/>
</dbReference>
<proteinExistence type="inferred from homology"/>
<name>TTCA_ECO7I</name>